<dbReference type="EC" id="3.5.4.25" evidence="1"/>
<dbReference type="EMBL" id="CP000753">
    <property type="protein sequence ID" value="ABS07798.1"/>
    <property type="molecule type" value="Genomic_DNA"/>
</dbReference>
<dbReference type="RefSeq" id="WP_006087423.1">
    <property type="nucleotide sequence ID" value="NC_009665.1"/>
</dbReference>
<dbReference type="SMR" id="A6WLV9"/>
<dbReference type="GeneID" id="11771918"/>
<dbReference type="KEGG" id="sbm:Shew185_1653"/>
<dbReference type="HOGENOM" id="CLU_020273_2_1_6"/>
<dbReference type="UniPathway" id="UPA00275">
    <property type="reaction ID" value="UER00400"/>
</dbReference>
<dbReference type="GO" id="GO:0005829">
    <property type="term" value="C:cytosol"/>
    <property type="evidence" value="ECO:0007669"/>
    <property type="project" value="TreeGrafter"/>
</dbReference>
<dbReference type="GO" id="GO:0005525">
    <property type="term" value="F:GTP binding"/>
    <property type="evidence" value="ECO:0007669"/>
    <property type="project" value="UniProtKB-KW"/>
</dbReference>
<dbReference type="GO" id="GO:0003935">
    <property type="term" value="F:GTP cyclohydrolase II activity"/>
    <property type="evidence" value="ECO:0007669"/>
    <property type="project" value="UniProtKB-UniRule"/>
</dbReference>
<dbReference type="GO" id="GO:0008270">
    <property type="term" value="F:zinc ion binding"/>
    <property type="evidence" value="ECO:0007669"/>
    <property type="project" value="UniProtKB-UniRule"/>
</dbReference>
<dbReference type="GO" id="GO:0009231">
    <property type="term" value="P:riboflavin biosynthetic process"/>
    <property type="evidence" value="ECO:0007669"/>
    <property type="project" value="UniProtKB-UniRule"/>
</dbReference>
<dbReference type="CDD" id="cd00641">
    <property type="entry name" value="GTP_cyclohydro2"/>
    <property type="match status" value="1"/>
</dbReference>
<dbReference type="FunFam" id="3.40.50.10990:FF:000002">
    <property type="entry name" value="GTP cyclohydrolase-2"/>
    <property type="match status" value="1"/>
</dbReference>
<dbReference type="Gene3D" id="3.40.50.10990">
    <property type="entry name" value="GTP cyclohydrolase II"/>
    <property type="match status" value="1"/>
</dbReference>
<dbReference type="HAMAP" id="MF_00179">
    <property type="entry name" value="RibA"/>
    <property type="match status" value="1"/>
</dbReference>
<dbReference type="InterPro" id="IPR032677">
    <property type="entry name" value="GTP_cyclohydro_II"/>
</dbReference>
<dbReference type="InterPro" id="IPR000926">
    <property type="entry name" value="RibA"/>
</dbReference>
<dbReference type="InterPro" id="IPR036144">
    <property type="entry name" value="RibA-like_sf"/>
</dbReference>
<dbReference type="NCBIfam" id="NF001591">
    <property type="entry name" value="PRK00393.1"/>
    <property type="match status" value="1"/>
</dbReference>
<dbReference type="NCBIfam" id="TIGR00505">
    <property type="entry name" value="ribA"/>
    <property type="match status" value="1"/>
</dbReference>
<dbReference type="PANTHER" id="PTHR21327:SF18">
    <property type="entry name" value="3,4-DIHYDROXY-2-BUTANONE 4-PHOSPHATE SYNTHASE"/>
    <property type="match status" value="1"/>
</dbReference>
<dbReference type="PANTHER" id="PTHR21327">
    <property type="entry name" value="GTP CYCLOHYDROLASE II-RELATED"/>
    <property type="match status" value="1"/>
</dbReference>
<dbReference type="Pfam" id="PF00925">
    <property type="entry name" value="GTP_cyclohydro2"/>
    <property type="match status" value="1"/>
</dbReference>
<dbReference type="SUPFAM" id="SSF142695">
    <property type="entry name" value="RibA-like"/>
    <property type="match status" value="1"/>
</dbReference>
<protein>
    <recommendedName>
        <fullName evidence="1">GTP cyclohydrolase-2</fullName>
        <ecNumber evidence="1">3.5.4.25</ecNumber>
    </recommendedName>
    <alternativeName>
        <fullName evidence="1">GTP cyclohydrolase II</fullName>
    </alternativeName>
</protein>
<keyword id="KW-0342">GTP-binding</keyword>
<keyword id="KW-0378">Hydrolase</keyword>
<keyword id="KW-0479">Metal-binding</keyword>
<keyword id="KW-0547">Nucleotide-binding</keyword>
<keyword id="KW-0686">Riboflavin biosynthesis</keyword>
<keyword id="KW-0862">Zinc</keyword>
<gene>
    <name evidence="1" type="primary">ribA</name>
    <name type="ordered locus">Shew185_1653</name>
</gene>
<reference key="1">
    <citation type="submission" date="2007-07" db="EMBL/GenBank/DDBJ databases">
        <title>Complete sequence of chromosome of Shewanella baltica OS185.</title>
        <authorList>
            <consortium name="US DOE Joint Genome Institute"/>
            <person name="Copeland A."/>
            <person name="Lucas S."/>
            <person name="Lapidus A."/>
            <person name="Barry K."/>
            <person name="Glavina del Rio T."/>
            <person name="Dalin E."/>
            <person name="Tice H."/>
            <person name="Pitluck S."/>
            <person name="Sims D."/>
            <person name="Brettin T."/>
            <person name="Bruce D."/>
            <person name="Detter J.C."/>
            <person name="Han C."/>
            <person name="Schmutz J."/>
            <person name="Larimer F."/>
            <person name="Land M."/>
            <person name="Hauser L."/>
            <person name="Kyrpides N."/>
            <person name="Mikhailova N."/>
            <person name="Brettar I."/>
            <person name="Rodrigues J."/>
            <person name="Konstantinidis K."/>
            <person name="Tiedje J."/>
            <person name="Richardson P."/>
        </authorList>
    </citation>
    <scope>NUCLEOTIDE SEQUENCE [LARGE SCALE GENOMIC DNA]</scope>
    <source>
        <strain>OS185</strain>
    </source>
</reference>
<proteinExistence type="inferred from homology"/>
<evidence type="ECO:0000255" key="1">
    <source>
        <dbReference type="HAMAP-Rule" id="MF_00179"/>
    </source>
</evidence>
<organism>
    <name type="scientific">Shewanella baltica (strain OS185)</name>
    <dbReference type="NCBI Taxonomy" id="402882"/>
    <lineage>
        <taxon>Bacteria</taxon>
        <taxon>Pseudomonadati</taxon>
        <taxon>Pseudomonadota</taxon>
        <taxon>Gammaproteobacteria</taxon>
        <taxon>Alteromonadales</taxon>
        <taxon>Shewanellaceae</taxon>
        <taxon>Shewanella</taxon>
    </lineage>
</organism>
<feature type="chain" id="PRO_1000040580" description="GTP cyclohydrolase-2">
    <location>
        <begin position="1"/>
        <end position="204"/>
    </location>
</feature>
<feature type="active site" description="Proton acceptor" evidence="1">
    <location>
        <position position="126"/>
    </location>
</feature>
<feature type="active site" description="Nucleophile" evidence="1">
    <location>
        <position position="128"/>
    </location>
</feature>
<feature type="binding site" evidence="1">
    <location>
        <begin position="49"/>
        <end position="53"/>
    </location>
    <ligand>
        <name>GTP</name>
        <dbReference type="ChEBI" id="CHEBI:37565"/>
    </ligand>
</feature>
<feature type="binding site" evidence="1">
    <location>
        <position position="54"/>
    </location>
    <ligand>
        <name>Zn(2+)</name>
        <dbReference type="ChEBI" id="CHEBI:29105"/>
        <note>catalytic</note>
    </ligand>
</feature>
<feature type="binding site" evidence="1">
    <location>
        <position position="65"/>
    </location>
    <ligand>
        <name>Zn(2+)</name>
        <dbReference type="ChEBI" id="CHEBI:29105"/>
        <note>catalytic</note>
    </ligand>
</feature>
<feature type="binding site" evidence="1">
    <location>
        <position position="67"/>
    </location>
    <ligand>
        <name>Zn(2+)</name>
        <dbReference type="ChEBI" id="CHEBI:29105"/>
        <note>catalytic</note>
    </ligand>
</feature>
<feature type="binding site" evidence="1">
    <location>
        <position position="70"/>
    </location>
    <ligand>
        <name>GTP</name>
        <dbReference type="ChEBI" id="CHEBI:37565"/>
    </ligand>
</feature>
<feature type="binding site" evidence="1">
    <location>
        <begin position="92"/>
        <end position="94"/>
    </location>
    <ligand>
        <name>GTP</name>
        <dbReference type="ChEBI" id="CHEBI:37565"/>
    </ligand>
</feature>
<feature type="binding site" evidence="1">
    <location>
        <position position="114"/>
    </location>
    <ligand>
        <name>GTP</name>
        <dbReference type="ChEBI" id="CHEBI:37565"/>
    </ligand>
</feature>
<feature type="binding site" evidence="1">
    <location>
        <position position="149"/>
    </location>
    <ligand>
        <name>GTP</name>
        <dbReference type="ChEBI" id="CHEBI:37565"/>
    </ligand>
</feature>
<feature type="binding site" evidence="1">
    <location>
        <position position="154"/>
    </location>
    <ligand>
        <name>GTP</name>
        <dbReference type="ChEBI" id="CHEBI:37565"/>
    </ligand>
</feature>
<name>RIBA_SHEB8</name>
<accession>A6WLV9</accession>
<sequence length="204" mass="23015">MSIKYVATSKLPTPWGVFAMHGFEDTESGKEHVALTFGTLSADEPVLGRIHSECLTGDALFSLRCDCGFQLQAAMQNIAETGSGFILYLRQEGRGIGLLNKIRAYELQDKGANTVEANEQLGFEADMRKYDMIKPMLEQIGVKHVRLMTNNPRKVKAMKEFGIEVVERVPLQVGKNRYNEAYLKTKSTELGHMMSEYHFMDENK</sequence>
<comment type="function">
    <text evidence="1">Catalyzes the conversion of GTP to 2,5-diamino-6-ribosylamino-4(3H)-pyrimidinone 5'-phosphate (DARP), formate and pyrophosphate.</text>
</comment>
<comment type="catalytic activity">
    <reaction evidence="1">
        <text>GTP + 4 H2O = 2,5-diamino-6-hydroxy-4-(5-phosphoribosylamino)-pyrimidine + formate + 2 phosphate + 3 H(+)</text>
        <dbReference type="Rhea" id="RHEA:23704"/>
        <dbReference type="ChEBI" id="CHEBI:15377"/>
        <dbReference type="ChEBI" id="CHEBI:15378"/>
        <dbReference type="ChEBI" id="CHEBI:15740"/>
        <dbReference type="ChEBI" id="CHEBI:37565"/>
        <dbReference type="ChEBI" id="CHEBI:43474"/>
        <dbReference type="ChEBI" id="CHEBI:58614"/>
        <dbReference type="EC" id="3.5.4.25"/>
    </reaction>
</comment>
<comment type="cofactor">
    <cofactor evidence="1">
        <name>Zn(2+)</name>
        <dbReference type="ChEBI" id="CHEBI:29105"/>
    </cofactor>
    <text evidence="1">Binds 1 zinc ion per subunit.</text>
</comment>
<comment type="pathway">
    <text evidence="1">Cofactor biosynthesis; riboflavin biosynthesis; 5-amino-6-(D-ribitylamino)uracil from GTP: step 1/4.</text>
</comment>
<comment type="similarity">
    <text evidence="1">Belongs to the GTP cyclohydrolase II family.</text>
</comment>